<feature type="chain" id="PRO_0000386286" description="GTPase Obg">
    <location>
        <begin position="1"/>
        <end position="431"/>
    </location>
</feature>
<feature type="domain" description="Obg" evidence="3">
    <location>
        <begin position="1"/>
        <end position="158"/>
    </location>
</feature>
<feature type="domain" description="OBG-type G" evidence="1">
    <location>
        <begin position="159"/>
        <end position="330"/>
    </location>
</feature>
<feature type="domain" description="OCT" evidence="2">
    <location>
        <begin position="353"/>
        <end position="431"/>
    </location>
</feature>
<feature type="region of interest" description="Disordered" evidence="4">
    <location>
        <begin position="118"/>
        <end position="144"/>
    </location>
</feature>
<feature type="binding site" evidence="1">
    <location>
        <begin position="165"/>
        <end position="172"/>
    </location>
    <ligand>
        <name>GTP</name>
        <dbReference type="ChEBI" id="CHEBI:37565"/>
    </ligand>
</feature>
<feature type="binding site" evidence="1">
    <location>
        <position position="172"/>
    </location>
    <ligand>
        <name>Mg(2+)</name>
        <dbReference type="ChEBI" id="CHEBI:18420"/>
    </ligand>
</feature>
<feature type="binding site" evidence="1">
    <location>
        <begin position="190"/>
        <end position="194"/>
    </location>
    <ligand>
        <name>GTP</name>
        <dbReference type="ChEBI" id="CHEBI:37565"/>
    </ligand>
</feature>
<feature type="binding site" evidence="1">
    <location>
        <position position="192"/>
    </location>
    <ligand>
        <name>Mg(2+)</name>
        <dbReference type="ChEBI" id="CHEBI:18420"/>
    </ligand>
</feature>
<feature type="binding site" evidence="1">
    <location>
        <begin position="212"/>
        <end position="215"/>
    </location>
    <ligand>
        <name>GTP</name>
        <dbReference type="ChEBI" id="CHEBI:37565"/>
    </ligand>
</feature>
<feature type="binding site" evidence="1">
    <location>
        <begin position="282"/>
        <end position="285"/>
    </location>
    <ligand>
        <name>GTP</name>
        <dbReference type="ChEBI" id="CHEBI:37565"/>
    </ligand>
</feature>
<feature type="binding site" evidence="1">
    <location>
        <begin position="311"/>
        <end position="313"/>
    </location>
    <ligand>
        <name>GTP</name>
        <dbReference type="ChEBI" id="CHEBI:37565"/>
    </ligand>
</feature>
<organism>
    <name type="scientific">Staphylococcus saprophyticus subsp. saprophyticus (strain ATCC 15305 / DSM 20229 / NCIMB 8711 / NCTC 7292 / S-41)</name>
    <dbReference type="NCBI Taxonomy" id="342451"/>
    <lineage>
        <taxon>Bacteria</taxon>
        <taxon>Bacillati</taxon>
        <taxon>Bacillota</taxon>
        <taxon>Bacilli</taxon>
        <taxon>Bacillales</taxon>
        <taxon>Staphylococcaceae</taxon>
        <taxon>Staphylococcus</taxon>
    </lineage>
</organism>
<dbReference type="EC" id="3.6.5.-" evidence="1"/>
<dbReference type="EMBL" id="AP008934">
    <property type="protein sequence ID" value="BAE18260.1"/>
    <property type="molecule type" value="Genomic_DNA"/>
</dbReference>
<dbReference type="SMR" id="Q49Y82"/>
<dbReference type="GeneID" id="3614957"/>
<dbReference type="KEGG" id="ssp:SSP1115"/>
<dbReference type="PATRIC" id="fig|342451.11.peg.1114"/>
<dbReference type="eggNOG" id="COG0536">
    <property type="taxonomic scope" value="Bacteria"/>
</dbReference>
<dbReference type="HOGENOM" id="CLU_011747_2_1_9"/>
<dbReference type="OrthoDB" id="9807318at2"/>
<dbReference type="Proteomes" id="UP000006371">
    <property type="component" value="Chromosome"/>
</dbReference>
<dbReference type="GO" id="GO:0005737">
    <property type="term" value="C:cytoplasm"/>
    <property type="evidence" value="ECO:0007669"/>
    <property type="project" value="UniProtKB-SubCell"/>
</dbReference>
<dbReference type="GO" id="GO:0005525">
    <property type="term" value="F:GTP binding"/>
    <property type="evidence" value="ECO:0007669"/>
    <property type="project" value="UniProtKB-UniRule"/>
</dbReference>
<dbReference type="GO" id="GO:0003924">
    <property type="term" value="F:GTPase activity"/>
    <property type="evidence" value="ECO:0007669"/>
    <property type="project" value="UniProtKB-UniRule"/>
</dbReference>
<dbReference type="GO" id="GO:0000287">
    <property type="term" value="F:magnesium ion binding"/>
    <property type="evidence" value="ECO:0007669"/>
    <property type="project" value="InterPro"/>
</dbReference>
<dbReference type="GO" id="GO:0042254">
    <property type="term" value="P:ribosome biogenesis"/>
    <property type="evidence" value="ECO:0007669"/>
    <property type="project" value="UniProtKB-UniRule"/>
</dbReference>
<dbReference type="CDD" id="cd01898">
    <property type="entry name" value="Obg"/>
    <property type="match status" value="1"/>
</dbReference>
<dbReference type="FunFam" id="2.70.210.12:FF:000001">
    <property type="entry name" value="GTPase Obg"/>
    <property type="match status" value="1"/>
</dbReference>
<dbReference type="FunFam" id="3.40.50.300:FF:000515">
    <property type="entry name" value="GTPase Obg"/>
    <property type="match status" value="1"/>
</dbReference>
<dbReference type="Gene3D" id="3.30.300.350">
    <property type="entry name" value="GTP-binding protein OBG, C-terminal domain"/>
    <property type="match status" value="1"/>
</dbReference>
<dbReference type="Gene3D" id="2.70.210.12">
    <property type="entry name" value="GTP1/OBG domain"/>
    <property type="match status" value="1"/>
</dbReference>
<dbReference type="Gene3D" id="3.40.50.300">
    <property type="entry name" value="P-loop containing nucleotide triphosphate hydrolases"/>
    <property type="match status" value="1"/>
</dbReference>
<dbReference type="HAMAP" id="MF_01454">
    <property type="entry name" value="GTPase_Obg"/>
    <property type="match status" value="1"/>
</dbReference>
<dbReference type="InterPro" id="IPR031167">
    <property type="entry name" value="G_OBG"/>
</dbReference>
<dbReference type="InterPro" id="IPR006073">
    <property type="entry name" value="GTP-bd"/>
</dbReference>
<dbReference type="InterPro" id="IPR014100">
    <property type="entry name" value="GTP-bd_Obg/CgtA"/>
</dbReference>
<dbReference type="InterPro" id="IPR036346">
    <property type="entry name" value="GTP-bd_prot_GTP1/OBG_C_sf"/>
</dbReference>
<dbReference type="InterPro" id="IPR006074">
    <property type="entry name" value="GTP1-OBG_CS"/>
</dbReference>
<dbReference type="InterPro" id="IPR006169">
    <property type="entry name" value="GTP1_OBG_dom"/>
</dbReference>
<dbReference type="InterPro" id="IPR036726">
    <property type="entry name" value="GTP1_OBG_dom_sf"/>
</dbReference>
<dbReference type="InterPro" id="IPR045086">
    <property type="entry name" value="OBG_GTPase"/>
</dbReference>
<dbReference type="InterPro" id="IPR015349">
    <property type="entry name" value="OCT_dom"/>
</dbReference>
<dbReference type="InterPro" id="IPR027417">
    <property type="entry name" value="P-loop_NTPase"/>
</dbReference>
<dbReference type="NCBIfam" id="TIGR02729">
    <property type="entry name" value="Obg_CgtA"/>
    <property type="match status" value="1"/>
</dbReference>
<dbReference type="NCBIfam" id="TIGR03595">
    <property type="entry name" value="Obg_CgtA_exten"/>
    <property type="match status" value="1"/>
</dbReference>
<dbReference type="NCBIfam" id="NF008954">
    <property type="entry name" value="PRK12296.1"/>
    <property type="match status" value="1"/>
</dbReference>
<dbReference type="NCBIfam" id="NF008955">
    <property type="entry name" value="PRK12297.1"/>
    <property type="match status" value="1"/>
</dbReference>
<dbReference type="NCBIfam" id="NF008956">
    <property type="entry name" value="PRK12299.1"/>
    <property type="match status" value="1"/>
</dbReference>
<dbReference type="PANTHER" id="PTHR11702">
    <property type="entry name" value="DEVELOPMENTALLY REGULATED GTP-BINDING PROTEIN-RELATED"/>
    <property type="match status" value="1"/>
</dbReference>
<dbReference type="PANTHER" id="PTHR11702:SF31">
    <property type="entry name" value="MITOCHONDRIAL RIBOSOME-ASSOCIATED GTPASE 2"/>
    <property type="match status" value="1"/>
</dbReference>
<dbReference type="Pfam" id="PF09269">
    <property type="entry name" value="DUF1967"/>
    <property type="match status" value="1"/>
</dbReference>
<dbReference type="Pfam" id="PF01018">
    <property type="entry name" value="GTP1_OBG"/>
    <property type="match status" value="1"/>
</dbReference>
<dbReference type="Pfam" id="PF01926">
    <property type="entry name" value="MMR_HSR1"/>
    <property type="match status" value="1"/>
</dbReference>
<dbReference type="PIRSF" id="PIRSF002401">
    <property type="entry name" value="GTP_bd_Obg/CgtA"/>
    <property type="match status" value="1"/>
</dbReference>
<dbReference type="PRINTS" id="PR00326">
    <property type="entry name" value="GTP1OBG"/>
</dbReference>
<dbReference type="SUPFAM" id="SSF102741">
    <property type="entry name" value="Obg GTP-binding protein C-terminal domain"/>
    <property type="match status" value="1"/>
</dbReference>
<dbReference type="SUPFAM" id="SSF82051">
    <property type="entry name" value="Obg GTP-binding protein N-terminal domain"/>
    <property type="match status" value="1"/>
</dbReference>
<dbReference type="SUPFAM" id="SSF52540">
    <property type="entry name" value="P-loop containing nucleoside triphosphate hydrolases"/>
    <property type="match status" value="1"/>
</dbReference>
<dbReference type="PROSITE" id="PS51710">
    <property type="entry name" value="G_OBG"/>
    <property type="match status" value="1"/>
</dbReference>
<dbReference type="PROSITE" id="PS00905">
    <property type="entry name" value="GTP1_OBG"/>
    <property type="match status" value="1"/>
</dbReference>
<dbReference type="PROSITE" id="PS51883">
    <property type="entry name" value="OBG"/>
    <property type="match status" value="1"/>
</dbReference>
<dbReference type="PROSITE" id="PS51881">
    <property type="entry name" value="OCT"/>
    <property type="match status" value="1"/>
</dbReference>
<gene>
    <name evidence="1" type="primary">obg</name>
    <name type="ordered locus">SSP1115</name>
</gene>
<protein>
    <recommendedName>
        <fullName evidence="1">GTPase Obg</fullName>
        <ecNumber evidence="1">3.6.5.-</ecNumber>
    </recommendedName>
    <alternativeName>
        <fullName evidence="1">GTP-binding protein Obg</fullName>
    </alternativeName>
</protein>
<proteinExistence type="inferred from homology"/>
<evidence type="ECO:0000255" key="1">
    <source>
        <dbReference type="HAMAP-Rule" id="MF_01454"/>
    </source>
</evidence>
<evidence type="ECO:0000255" key="2">
    <source>
        <dbReference type="PROSITE-ProRule" id="PRU01229"/>
    </source>
</evidence>
<evidence type="ECO:0000255" key="3">
    <source>
        <dbReference type="PROSITE-ProRule" id="PRU01231"/>
    </source>
</evidence>
<evidence type="ECO:0000256" key="4">
    <source>
        <dbReference type="SAM" id="MobiDB-lite"/>
    </source>
</evidence>
<keyword id="KW-0963">Cytoplasm</keyword>
<keyword id="KW-0342">GTP-binding</keyword>
<keyword id="KW-0378">Hydrolase</keyword>
<keyword id="KW-0460">Magnesium</keyword>
<keyword id="KW-0479">Metal-binding</keyword>
<keyword id="KW-0547">Nucleotide-binding</keyword>
<keyword id="KW-1185">Reference proteome</keyword>
<accession>Q49Y82</accession>
<reference key="1">
    <citation type="journal article" date="2005" name="Proc. Natl. Acad. Sci. U.S.A.">
        <title>Whole genome sequence of Staphylococcus saprophyticus reveals the pathogenesis of uncomplicated urinary tract infection.</title>
        <authorList>
            <person name="Kuroda M."/>
            <person name="Yamashita A."/>
            <person name="Hirakawa H."/>
            <person name="Kumano M."/>
            <person name="Morikawa K."/>
            <person name="Higashide M."/>
            <person name="Maruyama A."/>
            <person name="Inose Y."/>
            <person name="Matoba K."/>
            <person name="Toh H."/>
            <person name="Kuhara S."/>
            <person name="Hattori M."/>
            <person name="Ohta T."/>
        </authorList>
    </citation>
    <scope>NUCLEOTIDE SEQUENCE [LARGE SCALE GENOMIC DNA]</scope>
    <source>
        <strain>ATCC 15305 / DSM 20229 / NCIMB 8711 / NCTC 7292 / S-41</strain>
    </source>
</reference>
<sequence length="431" mass="47380">MFVDQVKISLKAGDGGNGITAYRREKYVPFGGPAGGDGGDGASIIFEVDEGLRTLLDFRYQTHFKAKRGDGGQSSNMHGKNAEHLVLKVPPGTIIKSADSEEVLADLVENGQRAVVAKGGRGGRGNSRFASPRNPAPDFSENGEPGEEIEVTLELKLLADVGLVGFPSVGKSTLLSIVSKAKPKIGAYHFTTIKPNLGVVSTKDQRSFVMADLPGLIEGASEGIGLGHQFLKHVERTKVIVHMIDMSGSEGRDPYEDYKVINEELSAYEHRLEERPQIVVANKMDMPNAEDNLALFKEEINDDSVHIIPLSTFKHDHIDELLYAIADKLEAVKDIDFSKDEEEDLGVNRVVYKHTPSQDKFTITRDDDAAYVVSGKAIERMFKMTDFNSDPAVRRFARQMRSMGIDDALRARGCRNGDIVRILGGEFEFVE</sequence>
<name>OBG_STAS1</name>
<comment type="function">
    <text evidence="1">An essential GTPase which binds GTP, GDP and possibly (p)ppGpp with moderate affinity, with high nucleotide exchange rates and a fairly low GTP hydrolysis rate. Plays a role in control of the cell cycle, stress response, ribosome biogenesis and in those bacteria that undergo differentiation, in morphogenesis control.</text>
</comment>
<comment type="cofactor">
    <cofactor evidence="1">
        <name>Mg(2+)</name>
        <dbReference type="ChEBI" id="CHEBI:18420"/>
    </cofactor>
</comment>
<comment type="subunit">
    <text evidence="1">Monomer.</text>
</comment>
<comment type="subcellular location">
    <subcellularLocation>
        <location evidence="1">Cytoplasm</location>
    </subcellularLocation>
</comment>
<comment type="similarity">
    <text evidence="1">Belongs to the TRAFAC class OBG-HflX-like GTPase superfamily. OBG GTPase family.</text>
</comment>